<dbReference type="EMBL" id="X69198">
    <property type="protein sequence ID" value="CAA48985.1"/>
    <property type="molecule type" value="Genomic_DNA"/>
</dbReference>
<dbReference type="PIR" id="F36841">
    <property type="entry name" value="F36841"/>
</dbReference>
<dbReference type="RefSeq" id="NP_042088.1">
    <property type="nucleotide sequence ID" value="NC_001611.1"/>
</dbReference>
<dbReference type="SMR" id="P33863"/>
<dbReference type="GeneID" id="1486409"/>
<dbReference type="KEGG" id="vg:1486409"/>
<dbReference type="Proteomes" id="UP000002060">
    <property type="component" value="Segment"/>
</dbReference>
<dbReference type="GO" id="GO:0003726">
    <property type="term" value="F:double-stranded RNA adenosine deaminase activity"/>
    <property type="evidence" value="ECO:0007669"/>
    <property type="project" value="InterPro"/>
</dbReference>
<dbReference type="GO" id="GO:0030291">
    <property type="term" value="F:protein serine/threonine kinase inhibitor activity"/>
    <property type="evidence" value="ECO:0007669"/>
    <property type="project" value="UniProtKB-KW"/>
</dbReference>
<dbReference type="GO" id="GO:0003723">
    <property type="term" value="F:RNA binding"/>
    <property type="evidence" value="ECO:0007669"/>
    <property type="project" value="UniProtKB-KW"/>
</dbReference>
<dbReference type="GO" id="GO:0052150">
    <property type="term" value="P:symbiont-mediated perturbation of host apoptosis"/>
    <property type="evidence" value="ECO:0007669"/>
    <property type="project" value="UniProtKB-KW"/>
</dbReference>
<dbReference type="GO" id="GO:0039548">
    <property type="term" value="P:symbiont-mediated suppression of host cytoplasmic pattern recognition receptor signaling pathway via inhibition of IRF3 activity"/>
    <property type="evidence" value="ECO:0007669"/>
    <property type="project" value="UniProtKB-KW"/>
</dbReference>
<dbReference type="GO" id="GO:0039557">
    <property type="term" value="P:symbiont-mediated suppression of host cytoplasmic pattern recognition receptor signaling pathway via inhibition of IRF7 activity"/>
    <property type="evidence" value="ECO:0007669"/>
    <property type="project" value="UniProtKB-KW"/>
</dbReference>
<dbReference type="GO" id="GO:0039579">
    <property type="term" value="P:symbiont-mediated suppression of host ISG15-protein conjugation"/>
    <property type="evidence" value="ECO:0007669"/>
    <property type="project" value="UniProtKB-KW"/>
</dbReference>
<dbReference type="GO" id="GO:0039580">
    <property type="term" value="P:symbiont-mediated suppression of host PKR/eIFalpha signaling"/>
    <property type="evidence" value="ECO:0007669"/>
    <property type="project" value="UniProtKB-KW"/>
</dbReference>
<dbReference type="GO" id="GO:0039502">
    <property type="term" value="P:symbiont-mediated suppression of host type I interferon-mediated signaling pathway"/>
    <property type="evidence" value="ECO:0007669"/>
    <property type="project" value="UniProtKB-KW"/>
</dbReference>
<dbReference type="CDD" id="cd19875">
    <property type="entry name" value="DSRM_EIF2AK2-like"/>
    <property type="match status" value="1"/>
</dbReference>
<dbReference type="FunFam" id="3.30.160.20:FF:000108">
    <property type="entry name" value="Double-stranded RNA-binding protein"/>
    <property type="match status" value="1"/>
</dbReference>
<dbReference type="Gene3D" id="3.30.160.20">
    <property type="match status" value="1"/>
</dbReference>
<dbReference type="Gene3D" id="1.10.10.10">
    <property type="entry name" value="Winged helix-like DNA-binding domain superfamily/Winged helix DNA-binding domain"/>
    <property type="match status" value="1"/>
</dbReference>
<dbReference type="InterPro" id="IPR014720">
    <property type="entry name" value="dsRBD_dom"/>
</dbReference>
<dbReference type="InterPro" id="IPR009179">
    <property type="entry name" value="E3L"/>
</dbReference>
<dbReference type="InterPro" id="IPR036388">
    <property type="entry name" value="WH-like_DNA-bd_sf"/>
</dbReference>
<dbReference type="InterPro" id="IPR036390">
    <property type="entry name" value="WH_DNA-bd_sf"/>
</dbReference>
<dbReference type="InterPro" id="IPR042371">
    <property type="entry name" value="Z_dom"/>
</dbReference>
<dbReference type="Pfam" id="PF00035">
    <property type="entry name" value="dsrm"/>
    <property type="match status" value="1"/>
</dbReference>
<dbReference type="Pfam" id="PF02295">
    <property type="entry name" value="z-alpha"/>
    <property type="match status" value="1"/>
</dbReference>
<dbReference type="PIRSF" id="PIRSF004008">
    <property type="entry name" value="VAC_E3L"/>
    <property type="match status" value="1"/>
</dbReference>
<dbReference type="SMART" id="SM00358">
    <property type="entry name" value="DSRM"/>
    <property type="match status" value="1"/>
</dbReference>
<dbReference type="SMART" id="SM00550">
    <property type="entry name" value="Zalpha"/>
    <property type="match status" value="1"/>
</dbReference>
<dbReference type="SUPFAM" id="SSF54768">
    <property type="entry name" value="dsRNA-binding domain-like"/>
    <property type="match status" value="1"/>
</dbReference>
<dbReference type="SUPFAM" id="SSF46785">
    <property type="entry name" value="Winged helix' DNA-binding domain"/>
    <property type="match status" value="1"/>
</dbReference>
<dbReference type="PROSITE" id="PS50137">
    <property type="entry name" value="DS_RBD"/>
    <property type="match status" value="1"/>
</dbReference>
<dbReference type="PROSITE" id="PS50139">
    <property type="entry name" value="Z_BINDING"/>
    <property type="match status" value="1"/>
</dbReference>
<reference key="1">
    <citation type="journal article" date="1993" name="Virus Res.">
        <title>Analysis of the nucleotide sequence of a 43 kbp segment of the genome of variola virus India-1967 strain.</title>
        <authorList>
            <person name="Shchelkunov S.N."/>
            <person name="Blinov V.M."/>
            <person name="Resenchuk S.M."/>
            <person name="Totmenin A.V."/>
            <person name="Sandakhchiev L.S."/>
        </authorList>
    </citation>
    <scope>NUCLEOTIDE SEQUENCE [GENOMIC DNA]</scope>
</reference>
<reference key="2">
    <citation type="journal article" date="1993" name="FEBS Lett.">
        <title>Genes of variola and vaccinia viruses necessary to overcome the host protective mechanisms.</title>
        <authorList>
            <person name="Shchelkunov S.N."/>
            <person name="Blinov V.M."/>
            <person name="Sandakhchiev L.S."/>
        </authorList>
    </citation>
    <scope>NUCLEOTIDE SEQUENCE [GENOMIC DNA]</scope>
</reference>
<reference key="3">
    <citation type="journal article" date="2014" name="RNA">
        <title>Variola virus E3L Zalpha domain, but not its Z-DNA binding activity, is required for PKR inhibition.</title>
        <authorList>
            <person name="Thakur M."/>
            <person name="Seo E.J."/>
            <person name="Dever T.E."/>
        </authorList>
    </citation>
    <scope>FUNCTION</scope>
    <scope>MUTAGENESIS OF LEU-36; ASN-44; TYR-48; LEU-50 AND TRP-66</scope>
    <scope>DOMAIN</scope>
</reference>
<organismHost>
    <name type="scientific">Homo sapiens</name>
    <name type="common">Human</name>
    <dbReference type="NCBI Taxonomy" id="9606"/>
</organismHost>
<protein>
    <recommendedName>
        <fullName>RNA-binding protein OPG065</fullName>
    </recommendedName>
    <alternativeName>
        <fullName>Protein E3</fullName>
    </alternativeName>
</protein>
<evidence type="ECO:0000250" key="1">
    <source>
        <dbReference type="UniProtKB" id="P21605"/>
    </source>
</evidence>
<evidence type="ECO:0000255" key="2">
    <source>
        <dbReference type="PROSITE-ProRule" id="PRU00073"/>
    </source>
</evidence>
<evidence type="ECO:0000255" key="3">
    <source>
        <dbReference type="PROSITE-ProRule" id="PRU00266"/>
    </source>
</evidence>
<evidence type="ECO:0000269" key="4">
    <source>
    </source>
</evidence>
<evidence type="ECO:0000305" key="5"/>
<evidence type="ECO:0000305" key="6">
    <source>
    </source>
</evidence>
<feature type="chain" id="PRO_0000099449" description="RNA-binding protein OPG065">
    <location>
        <begin position="1"/>
        <end position="190"/>
    </location>
</feature>
<feature type="domain" description="Z-binding" evidence="2 4">
    <location>
        <begin position="5"/>
        <end position="70"/>
    </location>
</feature>
<feature type="domain" description="DRBM" evidence="3 4">
    <location>
        <begin position="117"/>
        <end position="184"/>
    </location>
</feature>
<feature type="mutagenesis site" description="Impaired PKR inhibitory activity." evidence="4">
    <original>L</original>
    <variation>R</variation>
    <location>
        <position position="36"/>
    </location>
</feature>
<feature type="mutagenesis site" description="Impaired Z-DNA binding." evidence="4">
    <original>N</original>
    <variation>D</variation>
    <location>
        <position position="44"/>
    </location>
</feature>
<feature type="mutagenesis site" description="Impaired Z-DNA binding." evidence="4">
    <original>Y</original>
    <variation>A</variation>
    <location>
        <position position="48"/>
    </location>
</feature>
<feature type="mutagenesis site" description="Impaired PKR inhibitory activity." evidence="4">
    <original>L</original>
    <variation>P</variation>
    <location>
        <position position="50"/>
    </location>
</feature>
<feature type="mutagenesis site" description="Impaired Z-DNA binding." evidence="4">
    <original>W</original>
    <variation>A</variation>
    <location>
        <position position="66"/>
    </location>
</feature>
<name>PG065_VAR67</name>
<organism>
    <name type="scientific">Variola virus (isolate Human/India/Ind3/1967)</name>
    <name type="common">VARV</name>
    <name type="synonym">Smallpox virus</name>
    <dbReference type="NCBI Taxonomy" id="587200"/>
    <lineage>
        <taxon>Viruses</taxon>
        <taxon>Varidnaviria</taxon>
        <taxon>Bamfordvirae</taxon>
        <taxon>Nucleocytoviricota</taxon>
        <taxon>Pokkesviricetes</taxon>
        <taxon>Chitovirales</taxon>
        <taxon>Poxviridae</taxon>
        <taxon>Chordopoxvirinae</taxon>
        <taxon>Orthopoxvirus</taxon>
        <taxon>Variola virus</taxon>
    </lineage>
</organism>
<keyword id="KW-0945">Host-virus interaction</keyword>
<keyword id="KW-1090">Inhibition of host innate immune response by virus</keyword>
<keyword id="KW-1114">Inhibition of host interferon signaling pathway by virus</keyword>
<keyword id="KW-1092">Inhibition of host IRF3 by virus</keyword>
<keyword id="KW-1093">Inhibition of host IRF7 by virus</keyword>
<keyword id="KW-1095">Inhibition of host ISG15 by virus</keyword>
<keyword id="KW-1102">Inhibition of host PKR by virus</keyword>
<keyword id="KW-1113">Inhibition of host RLR pathway by virus</keyword>
<keyword id="KW-0922">Interferon antiviral system evasion</keyword>
<keyword id="KW-1119">Modulation of host cell apoptosis by virus</keyword>
<keyword id="KW-1185">Reference proteome</keyword>
<keyword id="KW-0694">RNA-binding</keyword>
<keyword id="KW-0899">Viral immunoevasion</keyword>
<proteinExistence type="evidence at protein level"/>
<accession>P33863</accession>
<comment type="function">
    <text evidence="1 6">RNA-binding protein that plays a role in the inhibition of multiple cellular antiviral responses activated by double-stranded RNA (dsRNA), such as inhibition of PKR activation, necroptosis, and IFN-mediated antiviral activities (Probable). Recognizes and binds Z-RNA structures via its Z-binding domain and dsRNA via its DRBM domain: RNA-binding activity is required to escape host ZBP1-dependent necroptosis (Probable). Mechanistically, the Z-binding domain binds Z-RNAs that are produced during vaccinia virus infection, thereby competing with Z-RNA detection by host ZBP1, suppressing ZBP1-dependent necroptosis (By similarity). Acts as a key inhibitor of the interferon response by blocking the phosphorylation and subsequent activation of IRF3 and IRF7 kinases that are required for interferon-alpha gene expression (By similarity). Inhibits NF-kappa-B activation and the ubiquitin-like protein ISG15, which is an early antiviral protein (By similarity). The binding with host ISG15 subsequently blocks host ISGylation (By similarity).</text>
</comment>
<comment type="subunit">
    <text evidence="1">Interacts with host G1P2/ISG15. Interacts with host EIF2AK2/PKR. Interacts with host ZBP1.</text>
</comment>
<comment type="domain">
    <text evidence="1 4">Contains a dsRNA binding domain (DRBM) and a Z-RNA binding domain (PubMed:24335187). The Z-binding domain recognizes and binds Z-RNA structures (By similarity).</text>
</comment>
<comment type="similarity">
    <text evidence="5">Belongs to the orthopoxvirus OPG065 family.</text>
</comment>
<gene>
    <name type="primary">OPG065</name>
    <name type="ORF">E3L</name>
</gene>
<sequence length="190" mass="21664">MSKIYIDERSDAEIVCEAIKNIGLEGVTAVQLTRQLNMEKREVNKALYDLQRSAMVYSSDDIPPRWFMTTEADKPDAMTMADVIIDDVSREKSMREDHKSFDDVIPAKKIIDWKNANPVTIINEYCQITKRDWSFRIESVGPSNSPTFYACVDIDGRVFDKADGKSKRDAKNNAAKLAVDKLLGYVIIRF</sequence>